<dbReference type="EMBL" id="BX950851">
    <property type="protein sequence ID" value="CAG77002.1"/>
    <property type="molecule type" value="Genomic_DNA"/>
</dbReference>
<dbReference type="RefSeq" id="WP_011095578.1">
    <property type="nucleotide sequence ID" value="NC_004547.2"/>
</dbReference>
<dbReference type="SMR" id="Q6CZP6"/>
<dbReference type="STRING" id="218491.ECA4105"/>
<dbReference type="GeneID" id="57210768"/>
<dbReference type="KEGG" id="eca:ECA4105"/>
<dbReference type="PATRIC" id="fig|218491.5.peg.4174"/>
<dbReference type="eggNOG" id="COG1281">
    <property type="taxonomic scope" value="Bacteria"/>
</dbReference>
<dbReference type="HOGENOM" id="CLU_054493_0_0_6"/>
<dbReference type="OrthoDB" id="9793753at2"/>
<dbReference type="Proteomes" id="UP000007966">
    <property type="component" value="Chromosome"/>
</dbReference>
<dbReference type="GO" id="GO:0005737">
    <property type="term" value="C:cytoplasm"/>
    <property type="evidence" value="ECO:0007669"/>
    <property type="project" value="UniProtKB-SubCell"/>
</dbReference>
<dbReference type="GO" id="GO:0044183">
    <property type="term" value="F:protein folding chaperone"/>
    <property type="evidence" value="ECO:0007669"/>
    <property type="project" value="TreeGrafter"/>
</dbReference>
<dbReference type="GO" id="GO:0051082">
    <property type="term" value="F:unfolded protein binding"/>
    <property type="evidence" value="ECO:0007669"/>
    <property type="project" value="UniProtKB-UniRule"/>
</dbReference>
<dbReference type="GO" id="GO:0042026">
    <property type="term" value="P:protein refolding"/>
    <property type="evidence" value="ECO:0007669"/>
    <property type="project" value="TreeGrafter"/>
</dbReference>
<dbReference type="CDD" id="cd00498">
    <property type="entry name" value="Hsp33"/>
    <property type="match status" value="1"/>
</dbReference>
<dbReference type="Gene3D" id="1.10.287.480">
    <property type="entry name" value="helix hairpin bin"/>
    <property type="match status" value="1"/>
</dbReference>
<dbReference type="Gene3D" id="3.55.30.10">
    <property type="entry name" value="Hsp33 domain"/>
    <property type="match status" value="1"/>
</dbReference>
<dbReference type="Gene3D" id="3.90.1280.10">
    <property type="entry name" value="HSP33 redox switch-like"/>
    <property type="match status" value="1"/>
</dbReference>
<dbReference type="HAMAP" id="MF_00117">
    <property type="entry name" value="HslO"/>
    <property type="match status" value="1"/>
</dbReference>
<dbReference type="InterPro" id="IPR000397">
    <property type="entry name" value="Heat_shock_Hsp33"/>
</dbReference>
<dbReference type="InterPro" id="IPR016154">
    <property type="entry name" value="Heat_shock_Hsp33_C"/>
</dbReference>
<dbReference type="InterPro" id="IPR016153">
    <property type="entry name" value="Heat_shock_Hsp33_N"/>
</dbReference>
<dbReference type="InterPro" id="IPR023212">
    <property type="entry name" value="Hsp33_helix_hairpin_bin_dom_sf"/>
</dbReference>
<dbReference type="NCBIfam" id="NF001033">
    <property type="entry name" value="PRK00114.1"/>
    <property type="match status" value="1"/>
</dbReference>
<dbReference type="PANTHER" id="PTHR30111">
    <property type="entry name" value="33 KDA CHAPERONIN"/>
    <property type="match status" value="1"/>
</dbReference>
<dbReference type="PANTHER" id="PTHR30111:SF1">
    <property type="entry name" value="33 KDA CHAPERONIN"/>
    <property type="match status" value="1"/>
</dbReference>
<dbReference type="Pfam" id="PF01430">
    <property type="entry name" value="HSP33"/>
    <property type="match status" value="1"/>
</dbReference>
<dbReference type="PIRSF" id="PIRSF005261">
    <property type="entry name" value="Heat_shock_Hsp33"/>
    <property type="match status" value="1"/>
</dbReference>
<dbReference type="SUPFAM" id="SSF64397">
    <property type="entry name" value="Hsp33 domain"/>
    <property type="match status" value="1"/>
</dbReference>
<dbReference type="SUPFAM" id="SSF118352">
    <property type="entry name" value="HSP33 redox switch-like"/>
    <property type="match status" value="1"/>
</dbReference>
<proteinExistence type="inferred from homology"/>
<name>HSLO_PECAS</name>
<sequence length="289" mass="32355">MAHDQLHRYLFENYAVRGELVTVNETYQRILTNHDYPAAVQTLLGEMLVATSLLTATLKFSGDITVQLQGDGPLKLAVINGNHLQQMRGVARLQGDIAPGSSLKEMVGNGYLVITITPTDGERYQGVVGLEGETVAECLESYFQQSEQLPTRLFIRTGQHEGNPVAAGMLLQVLPAQDAERNDFDHLAQLTATVKAEELFTLPANEVLYRLYHQEEVTVYEPQDVEFQCHCSRDRCANALMTLSDQEINEMIEQDGEIDMHCDYCGTHYLFNSLDIRAIRHDSSGNLLH</sequence>
<gene>
    <name evidence="1" type="primary">hslO</name>
    <name type="ordered locus">ECA4105</name>
</gene>
<keyword id="KW-0143">Chaperone</keyword>
<keyword id="KW-0963">Cytoplasm</keyword>
<keyword id="KW-1015">Disulfide bond</keyword>
<keyword id="KW-0676">Redox-active center</keyword>
<keyword id="KW-1185">Reference proteome</keyword>
<keyword id="KW-0862">Zinc</keyword>
<comment type="function">
    <text evidence="1">Redox regulated molecular chaperone. Protects both thermally unfolding and oxidatively damaged proteins from irreversible aggregation. Plays an important role in the bacterial defense system toward oxidative stress.</text>
</comment>
<comment type="subcellular location">
    <subcellularLocation>
        <location evidence="1">Cytoplasm</location>
    </subcellularLocation>
</comment>
<comment type="PTM">
    <text evidence="1">Under oxidizing conditions two disulfide bonds are formed involving the reactive cysteines. Under reducing conditions zinc is bound to the reactive cysteines and the protein is inactive.</text>
</comment>
<comment type="similarity">
    <text evidence="1">Belongs to the HSP33 family.</text>
</comment>
<protein>
    <recommendedName>
        <fullName evidence="1">33 kDa chaperonin</fullName>
    </recommendedName>
    <alternativeName>
        <fullName evidence="1">Heat shock protein 33 homolog</fullName>
        <shortName evidence="1">HSP33</shortName>
    </alternativeName>
</protein>
<accession>Q6CZP6</accession>
<organism>
    <name type="scientific">Pectobacterium atrosepticum (strain SCRI 1043 / ATCC BAA-672)</name>
    <name type="common">Erwinia carotovora subsp. atroseptica</name>
    <dbReference type="NCBI Taxonomy" id="218491"/>
    <lineage>
        <taxon>Bacteria</taxon>
        <taxon>Pseudomonadati</taxon>
        <taxon>Pseudomonadota</taxon>
        <taxon>Gammaproteobacteria</taxon>
        <taxon>Enterobacterales</taxon>
        <taxon>Pectobacteriaceae</taxon>
        <taxon>Pectobacterium</taxon>
    </lineage>
</organism>
<evidence type="ECO:0000255" key="1">
    <source>
        <dbReference type="HAMAP-Rule" id="MF_00117"/>
    </source>
</evidence>
<reference key="1">
    <citation type="journal article" date="2004" name="Proc. Natl. Acad. Sci. U.S.A.">
        <title>Genome sequence of the enterobacterial phytopathogen Erwinia carotovora subsp. atroseptica and characterization of virulence factors.</title>
        <authorList>
            <person name="Bell K.S."/>
            <person name="Sebaihia M."/>
            <person name="Pritchard L."/>
            <person name="Holden M.T.G."/>
            <person name="Hyman L.J."/>
            <person name="Holeva M.C."/>
            <person name="Thomson N.R."/>
            <person name="Bentley S.D."/>
            <person name="Churcher L.J.C."/>
            <person name="Mungall K."/>
            <person name="Atkin R."/>
            <person name="Bason N."/>
            <person name="Brooks K."/>
            <person name="Chillingworth T."/>
            <person name="Clark K."/>
            <person name="Doggett J."/>
            <person name="Fraser A."/>
            <person name="Hance Z."/>
            <person name="Hauser H."/>
            <person name="Jagels K."/>
            <person name="Moule S."/>
            <person name="Norbertczak H."/>
            <person name="Ormond D."/>
            <person name="Price C."/>
            <person name="Quail M.A."/>
            <person name="Sanders M."/>
            <person name="Walker D."/>
            <person name="Whitehead S."/>
            <person name="Salmond G.P.C."/>
            <person name="Birch P.R.J."/>
            <person name="Parkhill J."/>
            <person name="Toth I.K."/>
        </authorList>
    </citation>
    <scope>NUCLEOTIDE SEQUENCE [LARGE SCALE GENOMIC DNA]</scope>
    <source>
        <strain>SCRI 1043 / ATCC BAA-672</strain>
    </source>
</reference>
<feature type="chain" id="PRO_0000238066" description="33 kDa chaperonin">
    <location>
        <begin position="1"/>
        <end position="289"/>
    </location>
</feature>
<feature type="disulfide bond" description="Redox-active" evidence="1">
    <location>
        <begin position="229"/>
        <end position="231"/>
    </location>
</feature>
<feature type="disulfide bond" description="Redox-active" evidence="1">
    <location>
        <begin position="262"/>
        <end position="265"/>
    </location>
</feature>